<dbReference type="EMBL" id="CP000720">
    <property type="protein sequence ID" value="ABS46019.1"/>
    <property type="molecule type" value="Genomic_DNA"/>
</dbReference>
<dbReference type="RefSeq" id="WP_002209151.1">
    <property type="nucleotide sequence ID" value="NC_009708.1"/>
</dbReference>
<dbReference type="SMR" id="A7FMX9"/>
<dbReference type="GeneID" id="58049160"/>
<dbReference type="KEGG" id="ypi:YpsIP31758_3653"/>
<dbReference type="HOGENOM" id="CLU_113688_2_1_6"/>
<dbReference type="Proteomes" id="UP000002412">
    <property type="component" value="Chromosome"/>
</dbReference>
<dbReference type="GO" id="GO:0005829">
    <property type="term" value="C:cytosol"/>
    <property type="evidence" value="ECO:0007669"/>
    <property type="project" value="TreeGrafter"/>
</dbReference>
<dbReference type="GO" id="GO:0003723">
    <property type="term" value="F:RNA binding"/>
    <property type="evidence" value="ECO:0007669"/>
    <property type="project" value="UniProtKB-UniRule"/>
</dbReference>
<dbReference type="GO" id="GO:0006355">
    <property type="term" value="P:regulation of DNA-templated transcription"/>
    <property type="evidence" value="ECO:0007669"/>
    <property type="project" value="InterPro"/>
</dbReference>
<dbReference type="GO" id="GO:0043487">
    <property type="term" value="P:regulation of RNA stability"/>
    <property type="evidence" value="ECO:0007669"/>
    <property type="project" value="TreeGrafter"/>
</dbReference>
<dbReference type="GO" id="GO:0045974">
    <property type="term" value="P:regulation of translation, ncRNA-mediated"/>
    <property type="evidence" value="ECO:0007669"/>
    <property type="project" value="TreeGrafter"/>
</dbReference>
<dbReference type="CDD" id="cd01716">
    <property type="entry name" value="Hfq"/>
    <property type="match status" value="1"/>
</dbReference>
<dbReference type="FunFam" id="2.30.30.100:FF:000001">
    <property type="entry name" value="RNA-binding protein Hfq"/>
    <property type="match status" value="1"/>
</dbReference>
<dbReference type="Gene3D" id="2.30.30.100">
    <property type="match status" value="1"/>
</dbReference>
<dbReference type="HAMAP" id="MF_00436">
    <property type="entry name" value="Hfq"/>
    <property type="match status" value="1"/>
</dbReference>
<dbReference type="InterPro" id="IPR005001">
    <property type="entry name" value="Hfq"/>
</dbReference>
<dbReference type="InterPro" id="IPR010920">
    <property type="entry name" value="LSM_dom_sf"/>
</dbReference>
<dbReference type="InterPro" id="IPR047575">
    <property type="entry name" value="Sm"/>
</dbReference>
<dbReference type="NCBIfam" id="TIGR02383">
    <property type="entry name" value="Hfq"/>
    <property type="match status" value="1"/>
</dbReference>
<dbReference type="NCBIfam" id="NF001602">
    <property type="entry name" value="PRK00395.1"/>
    <property type="match status" value="1"/>
</dbReference>
<dbReference type="PANTHER" id="PTHR34772">
    <property type="entry name" value="RNA-BINDING PROTEIN HFQ"/>
    <property type="match status" value="1"/>
</dbReference>
<dbReference type="PANTHER" id="PTHR34772:SF1">
    <property type="entry name" value="RNA-BINDING PROTEIN HFQ"/>
    <property type="match status" value="1"/>
</dbReference>
<dbReference type="Pfam" id="PF17209">
    <property type="entry name" value="Hfq"/>
    <property type="match status" value="1"/>
</dbReference>
<dbReference type="SUPFAM" id="SSF50182">
    <property type="entry name" value="Sm-like ribonucleoproteins"/>
    <property type="match status" value="1"/>
</dbReference>
<dbReference type="PROSITE" id="PS52002">
    <property type="entry name" value="SM"/>
    <property type="match status" value="1"/>
</dbReference>
<name>HFQ_YERP3</name>
<accession>A7FMX9</accession>
<proteinExistence type="inferred from homology"/>
<evidence type="ECO:0000255" key="1">
    <source>
        <dbReference type="HAMAP-Rule" id="MF_00436"/>
    </source>
</evidence>
<evidence type="ECO:0000255" key="2">
    <source>
        <dbReference type="PROSITE-ProRule" id="PRU01346"/>
    </source>
</evidence>
<evidence type="ECO:0000256" key="3">
    <source>
        <dbReference type="SAM" id="MobiDB-lite"/>
    </source>
</evidence>
<keyword id="KW-0694">RNA-binding</keyword>
<keyword id="KW-0346">Stress response</keyword>
<comment type="function">
    <text evidence="1">RNA chaperone that binds small regulatory RNA (sRNAs) and mRNAs to facilitate mRNA translational regulation in response to envelope stress, environmental stress and changes in metabolite concentrations. Also binds with high specificity to tRNAs.</text>
</comment>
<comment type="subunit">
    <text evidence="1">Homohexamer.</text>
</comment>
<comment type="similarity">
    <text evidence="1">Belongs to the Hfq family.</text>
</comment>
<gene>
    <name evidence="1" type="primary">hfq</name>
    <name type="ordered locus">YpsIP31758_3653</name>
</gene>
<reference key="1">
    <citation type="journal article" date="2007" name="PLoS Genet.">
        <title>The complete genome sequence of Yersinia pseudotuberculosis IP31758, the causative agent of Far East scarlet-like fever.</title>
        <authorList>
            <person name="Eppinger M."/>
            <person name="Rosovitz M.J."/>
            <person name="Fricke W.F."/>
            <person name="Rasko D.A."/>
            <person name="Kokorina G."/>
            <person name="Fayolle C."/>
            <person name="Lindler L.E."/>
            <person name="Carniel E."/>
            <person name="Ravel J."/>
        </authorList>
    </citation>
    <scope>NUCLEOTIDE SEQUENCE [LARGE SCALE GENOMIC DNA]</scope>
    <source>
        <strain>IP 31758</strain>
    </source>
</reference>
<organism>
    <name type="scientific">Yersinia pseudotuberculosis serotype O:1b (strain IP 31758)</name>
    <dbReference type="NCBI Taxonomy" id="349747"/>
    <lineage>
        <taxon>Bacteria</taxon>
        <taxon>Pseudomonadati</taxon>
        <taxon>Pseudomonadota</taxon>
        <taxon>Gammaproteobacteria</taxon>
        <taxon>Enterobacterales</taxon>
        <taxon>Yersiniaceae</taxon>
        <taxon>Yersinia</taxon>
    </lineage>
</organism>
<sequence length="101" mass="11130">MAKGQSLQDPFLNALRRERVPVSIYLVNGIKLQGQVESFDQFVILLKNTVSQMVYKHAISTVVPSRPVSHHSNTPSGSTNNYHGSNPSAPQQPQQDSDDAE</sequence>
<protein>
    <recommendedName>
        <fullName evidence="1">RNA-binding protein Hfq</fullName>
    </recommendedName>
</protein>
<feature type="chain" id="PRO_1000060242" description="RNA-binding protein Hfq">
    <location>
        <begin position="1"/>
        <end position="101"/>
    </location>
</feature>
<feature type="domain" description="Sm" evidence="2">
    <location>
        <begin position="9"/>
        <end position="68"/>
    </location>
</feature>
<feature type="region of interest" description="Disordered" evidence="3">
    <location>
        <begin position="63"/>
        <end position="101"/>
    </location>
</feature>
<feature type="compositionally biased region" description="Polar residues" evidence="3">
    <location>
        <begin position="70"/>
        <end position="86"/>
    </location>
</feature>